<sequence length="365" mass="37962">MGRTQTVLALESSCDDTAAAVLRKGATGETQVLSSIVRGQDSLHAAYGGVVPEIAARAHAEILDICVEDALQAAQTSLHDVDAIAVTAGPGLIGGVVSGVMCAKGLALATGKPLYGINHLAGHALTPRLTDNVPFPYLMLLVSGGHCQFLLIKGPDDFKRIGGTIDDAPGEAFDKIARLLALPQPGGPSVERSARQGDAKRFSLPRPLLDRPGCDMSFSGLKTAVLRVRDGLVQDQGGLYPQDQADLSAGFQAAVVDVLAEKTSRAMQQYQQLSPTTATLCVAGGVAANMAIRTRLETVARDNGAVFVAPPLALCTDNAAMIGFAALERMADHPPDDLTLAARPRWPLDSKSPAMLGSGKKGAKA</sequence>
<accession>Q16CW3</accession>
<organism>
    <name type="scientific">Roseobacter denitrificans (strain ATCC 33942 / OCh 114)</name>
    <name type="common">Erythrobacter sp. (strain OCh 114)</name>
    <name type="synonym">Roseobacter denitrificans</name>
    <dbReference type="NCBI Taxonomy" id="375451"/>
    <lineage>
        <taxon>Bacteria</taxon>
        <taxon>Pseudomonadati</taxon>
        <taxon>Pseudomonadota</taxon>
        <taxon>Alphaproteobacteria</taxon>
        <taxon>Rhodobacterales</taxon>
        <taxon>Roseobacteraceae</taxon>
        <taxon>Roseobacter</taxon>
    </lineage>
</organism>
<evidence type="ECO:0000255" key="1">
    <source>
        <dbReference type="HAMAP-Rule" id="MF_01445"/>
    </source>
</evidence>
<evidence type="ECO:0000256" key="2">
    <source>
        <dbReference type="SAM" id="MobiDB-lite"/>
    </source>
</evidence>
<dbReference type="EC" id="2.3.1.234" evidence="1"/>
<dbReference type="EMBL" id="CP000362">
    <property type="protein sequence ID" value="ABG30180.1"/>
    <property type="molecule type" value="Genomic_DNA"/>
</dbReference>
<dbReference type="RefSeq" id="WP_011566802.1">
    <property type="nucleotide sequence ID" value="NC_008209.1"/>
</dbReference>
<dbReference type="SMR" id="Q16CW3"/>
<dbReference type="STRING" id="375451.RD1_0470"/>
<dbReference type="KEGG" id="rde:RD1_0470"/>
<dbReference type="eggNOG" id="COG0533">
    <property type="taxonomic scope" value="Bacteria"/>
</dbReference>
<dbReference type="HOGENOM" id="CLU_023208_0_2_5"/>
<dbReference type="OrthoDB" id="9806197at2"/>
<dbReference type="Proteomes" id="UP000007029">
    <property type="component" value="Chromosome"/>
</dbReference>
<dbReference type="GO" id="GO:0005737">
    <property type="term" value="C:cytoplasm"/>
    <property type="evidence" value="ECO:0007669"/>
    <property type="project" value="UniProtKB-SubCell"/>
</dbReference>
<dbReference type="GO" id="GO:0005506">
    <property type="term" value="F:iron ion binding"/>
    <property type="evidence" value="ECO:0007669"/>
    <property type="project" value="UniProtKB-UniRule"/>
</dbReference>
<dbReference type="GO" id="GO:0061711">
    <property type="term" value="F:N(6)-L-threonylcarbamoyladenine synthase activity"/>
    <property type="evidence" value="ECO:0007669"/>
    <property type="project" value="UniProtKB-EC"/>
</dbReference>
<dbReference type="GO" id="GO:0002949">
    <property type="term" value="P:tRNA threonylcarbamoyladenosine modification"/>
    <property type="evidence" value="ECO:0007669"/>
    <property type="project" value="UniProtKB-UniRule"/>
</dbReference>
<dbReference type="CDD" id="cd24133">
    <property type="entry name" value="ASKHA_NBD_TsaD_bac"/>
    <property type="match status" value="1"/>
</dbReference>
<dbReference type="FunFam" id="3.30.420.40:FF:000012">
    <property type="entry name" value="tRNA N6-adenosine threonylcarbamoyltransferase"/>
    <property type="match status" value="1"/>
</dbReference>
<dbReference type="FunFam" id="3.30.420.40:FF:000040">
    <property type="entry name" value="tRNA N6-adenosine threonylcarbamoyltransferase"/>
    <property type="match status" value="1"/>
</dbReference>
<dbReference type="Gene3D" id="3.30.420.40">
    <property type="match status" value="2"/>
</dbReference>
<dbReference type="HAMAP" id="MF_01445">
    <property type="entry name" value="TsaD"/>
    <property type="match status" value="1"/>
</dbReference>
<dbReference type="InterPro" id="IPR043129">
    <property type="entry name" value="ATPase_NBD"/>
</dbReference>
<dbReference type="InterPro" id="IPR000905">
    <property type="entry name" value="Gcp-like_dom"/>
</dbReference>
<dbReference type="InterPro" id="IPR017861">
    <property type="entry name" value="KAE1/TsaD"/>
</dbReference>
<dbReference type="InterPro" id="IPR022450">
    <property type="entry name" value="TsaD"/>
</dbReference>
<dbReference type="NCBIfam" id="TIGR00329">
    <property type="entry name" value="gcp_kae1"/>
    <property type="match status" value="1"/>
</dbReference>
<dbReference type="NCBIfam" id="TIGR03723">
    <property type="entry name" value="T6A_TsaD_YgjD"/>
    <property type="match status" value="1"/>
</dbReference>
<dbReference type="PANTHER" id="PTHR11735">
    <property type="entry name" value="TRNA N6-ADENOSINE THREONYLCARBAMOYLTRANSFERASE"/>
    <property type="match status" value="1"/>
</dbReference>
<dbReference type="PANTHER" id="PTHR11735:SF6">
    <property type="entry name" value="TRNA N6-ADENOSINE THREONYLCARBAMOYLTRANSFERASE, MITOCHONDRIAL"/>
    <property type="match status" value="1"/>
</dbReference>
<dbReference type="Pfam" id="PF00814">
    <property type="entry name" value="TsaD"/>
    <property type="match status" value="1"/>
</dbReference>
<dbReference type="PRINTS" id="PR00789">
    <property type="entry name" value="OSIALOPTASE"/>
</dbReference>
<dbReference type="SUPFAM" id="SSF53067">
    <property type="entry name" value="Actin-like ATPase domain"/>
    <property type="match status" value="2"/>
</dbReference>
<reference key="1">
    <citation type="journal article" date="2007" name="J. Bacteriol.">
        <title>The complete genome sequence of Roseobacter denitrificans reveals a mixotrophic rather than photosynthetic metabolism.</title>
        <authorList>
            <person name="Swingley W.D."/>
            <person name="Sadekar S."/>
            <person name="Mastrian S.D."/>
            <person name="Matthies H.J."/>
            <person name="Hao J."/>
            <person name="Ramos H."/>
            <person name="Acharya C.R."/>
            <person name="Conrad A.L."/>
            <person name="Taylor H.L."/>
            <person name="Dejesa L.C."/>
            <person name="Shah M.K."/>
            <person name="O'Huallachain M.E."/>
            <person name="Lince M.T."/>
            <person name="Blankenship R.E."/>
            <person name="Beatty J.T."/>
            <person name="Touchman J.W."/>
        </authorList>
    </citation>
    <scope>NUCLEOTIDE SEQUENCE [LARGE SCALE GENOMIC DNA]</scope>
    <source>
        <strain>ATCC 33942 / OCh 114</strain>
    </source>
</reference>
<protein>
    <recommendedName>
        <fullName evidence="1">tRNA N6-adenosine threonylcarbamoyltransferase</fullName>
        <ecNumber evidence="1">2.3.1.234</ecNumber>
    </recommendedName>
    <alternativeName>
        <fullName evidence="1">N6-L-threonylcarbamoyladenine synthase</fullName>
        <shortName evidence="1">t(6)A synthase</shortName>
    </alternativeName>
    <alternativeName>
        <fullName evidence="1">t(6)A37 threonylcarbamoyladenosine biosynthesis protein TsaD</fullName>
    </alternativeName>
    <alternativeName>
        <fullName evidence="1">tRNA threonylcarbamoyladenosine biosynthesis protein TsaD</fullName>
    </alternativeName>
</protein>
<feature type="chain" id="PRO_0000303527" description="tRNA N6-adenosine threonylcarbamoyltransferase">
    <location>
        <begin position="1"/>
        <end position="365"/>
    </location>
</feature>
<feature type="region of interest" description="Disordered" evidence="2">
    <location>
        <begin position="342"/>
        <end position="365"/>
    </location>
</feature>
<feature type="binding site" evidence="1">
    <location>
        <position position="119"/>
    </location>
    <ligand>
        <name>Fe cation</name>
        <dbReference type="ChEBI" id="CHEBI:24875"/>
    </ligand>
</feature>
<feature type="binding site" evidence="1">
    <location>
        <position position="123"/>
    </location>
    <ligand>
        <name>Fe cation</name>
        <dbReference type="ChEBI" id="CHEBI:24875"/>
    </ligand>
</feature>
<feature type="binding site" evidence="1">
    <location>
        <begin position="141"/>
        <end position="145"/>
    </location>
    <ligand>
        <name>substrate</name>
    </ligand>
</feature>
<feature type="binding site" evidence="1">
    <location>
        <position position="174"/>
    </location>
    <ligand>
        <name>substrate</name>
    </ligand>
</feature>
<feature type="binding site" evidence="1">
    <location>
        <position position="187"/>
    </location>
    <ligand>
        <name>substrate</name>
    </ligand>
</feature>
<feature type="binding site" evidence="1">
    <location>
        <position position="289"/>
    </location>
    <ligand>
        <name>substrate</name>
    </ligand>
</feature>
<feature type="binding site" evidence="1">
    <location>
        <position position="317"/>
    </location>
    <ligand>
        <name>Fe cation</name>
        <dbReference type="ChEBI" id="CHEBI:24875"/>
    </ligand>
</feature>
<comment type="function">
    <text evidence="1">Required for the formation of a threonylcarbamoyl group on adenosine at position 37 (t(6)A37) in tRNAs that read codons beginning with adenine. Is involved in the transfer of the threonylcarbamoyl moiety of threonylcarbamoyl-AMP (TC-AMP) to the N6 group of A37, together with TsaE and TsaB. TsaD likely plays a direct catalytic role in this reaction.</text>
</comment>
<comment type="catalytic activity">
    <reaction evidence="1">
        <text>L-threonylcarbamoyladenylate + adenosine(37) in tRNA = N(6)-L-threonylcarbamoyladenosine(37) in tRNA + AMP + H(+)</text>
        <dbReference type="Rhea" id="RHEA:37059"/>
        <dbReference type="Rhea" id="RHEA-COMP:10162"/>
        <dbReference type="Rhea" id="RHEA-COMP:10163"/>
        <dbReference type="ChEBI" id="CHEBI:15378"/>
        <dbReference type="ChEBI" id="CHEBI:73682"/>
        <dbReference type="ChEBI" id="CHEBI:74411"/>
        <dbReference type="ChEBI" id="CHEBI:74418"/>
        <dbReference type="ChEBI" id="CHEBI:456215"/>
        <dbReference type="EC" id="2.3.1.234"/>
    </reaction>
</comment>
<comment type="cofactor">
    <cofactor evidence="1">
        <name>Fe(2+)</name>
        <dbReference type="ChEBI" id="CHEBI:29033"/>
    </cofactor>
    <text evidence="1">Binds 1 Fe(2+) ion per subunit.</text>
</comment>
<comment type="subcellular location">
    <subcellularLocation>
        <location evidence="1">Cytoplasm</location>
    </subcellularLocation>
</comment>
<comment type="similarity">
    <text evidence="1">Belongs to the KAE1 / TsaD family.</text>
</comment>
<name>TSAD_ROSDO</name>
<keyword id="KW-0012">Acyltransferase</keyword>
<keyword id="KW-0963">Cytoplasm</keyword>
<keyword id="KW-0408">Iron</keyword>
<keyword id="KW-0479">Metal-binding</keyword>
<keyword id="KW-1185">Reference proteome</keyword>
<keyword id="KW-0808">Transferase</keyword>
<keyword id="KW-0819">tRNA processing</keyword>
<gene>
    <name evidence="1" type="primary">tsaD</name>
    <name type="synonym">gcp</name>
    <name type="ordered locus">RD1_0470</name>
</gene>
<proteinExistence type="inferred from homology"/>